<evidence type="ECO:0000255" key="1">
    <source>
        <dbReference type="HAMAP-Rule" id="MF_01683"/>
    </source>
</evidence>
<comment type="function">
    <text evidence="1">Catalyzes the phosphorylation of methylthioribose into methylthioribose-1-phosphate.</text>
</comment>
<comment type="catalytic activity">
    <reaction evidence="1">
        <text>5-(methylsulfanyl)-D-ribose + ATP = 5-(methylsulfanyl)-alpha-D-ribose 1-phosphate + ADP + H(+)</text>
        <dbReference type="Rhea" id="RHEA:22312"/>
        <dbReference type="ChEBI" id="CHEBI:15378"/>
        <dbReference type="ChEBI" id="CHEBI:30616"/>
        <dbReference type="ChEBI" id="CHEBI:58533"/>
        <dbReference type="ChEBI" id="CHEBI:78440"/>
        <dbReference type="ChEBI" id="CHEBI:456216"/>
        <dbReference type="EC" id="2.7.1.100"/>
    </reaction>
</comment>
<comment type="pathway">
    <text evidence="1">Amino-acid biosynthesis; L-methionine biosynthesis via salvage pathway; S-methyl-5-thio-alpha-D-ribose 1-phosphate from S-methyl-5'-thioadenosine (hydrolase route): step 2/2.</text>
</comment>
<comment type="subunit">
    <text evidence="1">Homodimer.</text>
</comment>
<comment type="similarity">
    <text evidence="1">Belongs to the methylthioribose kinase family.</text>
</comment>
<keyword id="KW-0028">Amino-acid biosynthesis</keyword>
<keyword id="KW-0067">ATP-binding</keyword>
<keyword id="KW-0418">Kinase</keyword>
<keyword id="KW-0486">Methionine biosynthesis</keyword>
<keyword id="KW-0547">Nucleotide-binding</keyword>
<keyword id="KW-0808">Transferase</keyword>
<name>MTNK_KLEP3</name>
<proteinExistence type="inferred from homology"/>
<accession>B5XZW3</accession>
<reference key="1">
    <citation type="journal article" date="2008" name="PLoS Genet.">
        <title>Complete genome sequence of the N2-fixing broad host range endophyte Klebsiella pneumoniae 342 and virulence predictions verified in mice.</title>
        <authorList>
            <person name="Fouts D.E."/>
            <person name="Tyler H.L."/>
            <person name="DeBoy R.T."/>
            <person name="Daugherty S."/>
            <person name="Ren Q."/>
            <person name="Badger J.H."/>
            <person name="Durkin A.S."/>
            <person name="Huot H."/>
            <person name="Shrivastava S."/>
            <person name="Kothari S."/>
            <person name="Dodson R.J."/>
            <person name="Mohamoud Y."/>
            <person name="Khouri H."/>
            <person name="Roesch L.F.W."/>
            <person name="Krogfelt K.A."/>
            <person name="Struve C."/>
            <person name="Triplett E.W."/>
            <person name="Methe B.A."/>
        </authorList>
    </citation>
    <scope>NUCLEOTIDE SEQUENCE [LARGE SCALE GENOMIC DNA]</scope>
    <source>
        <strain>342</strain>
    </source>
</reference>
<organism>
    <name type="scientific">Klebsiella pneumoniae (strain 342)</name>
    <dbReference type="NCBI Taxonomy" id="507522"/>
    <lineage>
        <taxon>Bacteria</taxon>
        <taxon>Pseudomonadati</taxon>
        <taxon>Pseudomonadota</taxon>
        <taxon>Gammaproteobacteria</taxon>
        <taxon>Enterobacterales</taxon>
        <taxon>Enterobacteriaceae</taxon>
        <taxon>Klebsiella/Raoultella group</taxon>
        <taxon>Klebsiella</taxon>
        <taxon>Klebsiella pneumoniae complex</taxon>
    </lineage>
</organism>
<protein>
    <recommendedName>
        <fullName evidence="1">Methylthioribose kinase</fullName>
        <shortName evidence="1">MTR kinase</shortName>
        <ecNumber evidence="1">2.7.1.100</ecNumber>
    </recommendedName>
</protein>
<gene>
    <name evidence="1" type="primary">mtnK</name>
    <name type="ordered locus">KPK_3950</name>
</gene>
<feature type="chain" id="PRO_1000187404" description="Methylthioribose kinase">
    <location>
        <begin position="1"/>
        <end position="399"/>
    </location>
</feature>
<feature type="binding site" evidence="1">
    <location>
        <position position="40"/>
    </location>
    <ligand>
        <name>ATP</name>
        <dbReference type="ChEBI" id="CHEBI:30616"/>
    </ligand>
</feature>
<feature type="binding site" evidence="1">
    <location>
        <position position="57"/>
    </location>
    <ligand>
        <name>ATP</name>
        <dbReference type="ChEBI" id="CHEBI:30616"/>
    </ligand>
</feature>
<feature type="binding site" evidence="1">
    <location>
        <begin position="111"/>
        <end position="113"/>
    </location>
    <ligand>
        <name>ATP</name>
        <dbReference type="ChEBI" id="CHEBI:30616"/>
    </ligand>
</feature>
<feature type="binding site" evidence="1">
    <location>
        <position position="229"/>
    </location>
    <ligand>
        <name>substrate</name>
    </ligand>
</feature>
<feature type="binding site" evidence="1">
    <location>
        <begin position="246"/>
        <end position="248"/>
    </location>
    <ligand>
        <name>ATP</name>
        <dbReference type="ChEBI" id="CHEBI:30616"/>
    </ligand>
</feature>
<feature type="binding site" evidence="1">
    <location>
        <position position="344"/>
    </location>
    <ligand>
        <name>substrate</name>
    </ligand>
</feature>
<sequence length="399" mass="44567">MSQYHTFTAHDAVAYAQQFAGIDNPSELVSAQEVGDGNLNLVFKVFDRQGVSRAIVKQALPYVRCVGESWPLTLDRARLEAQTLVAHYQHSPQHTVKIHHFDPELAVMVMEDLSDHRIWRGELIANVYYPQAARQLGDYLAQVLFHTSDFYLHPHEKKAQVAQFSNPAMCEITEDLFFNDPYQIHERNNYPAELETDVAALRDDAQLKLAVAALKHRFFAHAEALLHGDIHSGSIFVAEGSLKAIDAEFGYFGPIGFDIGTAIGNLLLNYCGLPGQLGIRDAAAAREQRLNDIHQLWTTFAERFQALAAEKTRDAALAYPGYASAFLKKVWADAVGFCGSELIRRSVGLSHVADIDTIQDDAMRHECLRHAITLGKALIVLAERIDSVDELLARVRQYS</sequence>
<dbReference type="EC" id="2.7.1.100" evidence="1"/>
<dbReference type="EMBL" id="CP000964">
    <property type="protein sequence ID" value="ACI11507.1"/>
    <property type="molecule type" value="Genomic_DNA"/>
</dbReference>
<dbReference type="SMR" id="B5XZW3"/>
<dbReference type="KEGG" id="kpe:KPK_3950"/>
<dbReference type="HOGENOM" id="CLU_033681_0_0_6"/>
<dbReference type="UniPathway" id="UPA00904">
    <property type="reaction ID" value="UER00872"/>
</dbReference>
<dbReference type="Proteomes" id="UP000001734">
    <property type="component" value="Chromosome"/>
</dbReference>
<dbReference type="GO" id="GO:0005524">
    <property type="term" value="F:ATP binding"/>
    <property type="evidence" value="ECO:0007669"/>
    <property type="project" value="UniProtKB-UniRule"/>
</dbReference>
<dbReference type="GO" id="GO:0046522">
    <property type="term" value="F:S-methyl-5-thioribose kinase activity"/>
    <property type="evidence" value="ECO:0007669"/>
    <property type="project" value="UniProtKB-UniRule"/>
</dbReference>
<dbReference type="GO" id="GO:0019509">
    <property type="term" value="P:L-methionine salvage from methylthioadenosine"/>
    <property type="evidence" value="ECO:0007669"/>
    <property type="project" value="UniProtKB-UniRule"/>
</dbReference>
<dbReference type="Gene3D" id="3.90.1200.10">
    <property type="match status" value="1"/>
</dbReference>
<dbReference type="Gene3D" id="3.30.200.20">
    <property type="entry name" value="Phosphorylase Kinase, domain 1"/>
    <property type="match status" value="1"/>
</dbReference>
<dbReference type="HAMAP" id="MF_01683">
    <property type="entry name" value="Salvage_MtnK"/>
    <property type="match status" value="1"/>
</dbReference>
<dbReference type="InterPro" id="IPR002575">
    <property type="entry name" value="Aminoglycoside_PTrfase"/>
</dbReference>
<dbReference type="InterPro" id="IPR011009">
    <property type="entry name" value="Kinase-like_dom_sf"/>
</dbReference>
<dbReference type="InterPro" id="IPR009212">
    <property type="entry name" value="Methylthioribose_kinase"/>
</dbReference>
<dbReference type="NCBIfam" id="TIGR01767">
    <property type="entry name" value="MTRK"/>
    <property type="match status" value="1"/>
</dbReference>
<dbReference type="PANTHER" id="PTHR34273">
    <property type="entry name" value="METHYLTHIORIBOSE KINASE"/>
    <property type="match status" value="1"/>
</dbReference>
<dbReference type="PANTHER" id="PTHR34273:SF2">
    <property type="entry name" value="METHYLTHIORIBOSE KINASE"/>
    <property type="match status" value="1"/>
</dbReference>
<dbReference type="Pfam" id="PF01636">
    <property type="entry name" value="APH"/>
    <property type="match status" value="1"/>
</dbReference>
<dbReference type="PIRSF" id="PIRSF031134">
    <property type="entry name" value="MTRK"/>
    <property type="match status" value="1"/>
</dbReference>
<dbReference type="SUPFAM" id="SSF56112">
    <property type="entry name" value="Protein kinase-like (PK-like)"/>
    <property type="match status" value="1"/>
</dbReference>